<keyword id="KW-0067">ATP-binding</keyword>
<keyword id="KW-0436">Ligase</keyword>
<keyword id="KW-0460">Magnesium</keyword>
<keyword id="KW-0464">Manganese</keyword>
<keyword id="KW-0479">Metal-binding</keyword>
<keyword id="KW-0547">Nucleotide-binding</keyword>
<keyword id="KW-0648">Protein biosynthesis</keyword>
<comment type="cofactor">
    <cofactor evidence="1">
        <name>Mg(2+)</name>
        <dbReference type="ChEBI" id="CHEBI:18420"/>
    </cofactor>
    <cofactor evidence="1">
        <name>Mn(2+)</name>
        <dbReference type="ChEBI" id="CHEBI:29035"/>
    </cofactor>
    <text evidence="1">Binds 2 magnesium or manganese ions per subunit.</text>
</comment>
<comment type="similarity">
    <text evidence="1">Belongs to the RimK family.</text>
</comment>
<name>RIMK_VIBVY</name>
<organism>
    <name type="scientific">Vibrio vulnificus (strain YJ016)</name>
    <dbReference type="NCBI Taxonomy" id="196600"/>
    <lineage>
        <taxon>Bacteria</taxon>
        <taxon>Pseudomonadati</taxon>
        <taxon>Pseudomonadota</taxon>
        <taxon>Gammaproteobacteria</taxon>
        <taxon>Vibrionales</taxon>
        <taxon>Vibrionaceae</taxon>
        <taxon>Vibrio</taxon>
    </lineage>
</organism>
<feature type="chain" id="PRO_0000205491" description="Probable alpha-L-glutamate ligase">
    <location>
        <begin position="1"/>
        <end position="301"/>
    </location>
</feature>
<feature type="domain" description="ATP-grasp" evidence="1">
    <location>
        <begin position="104"/>
        <end position="287"/>
    </location>
</feature>
<feature type="binding site" evidence="1">
    <location>
        <position position="141"/>
    </location>
    <ligand>
        <name>ATP</name>
        <dbReference type="ChEBI" id="CHEBI:30616"/>
    </ligand>
</feature>
<feature type="binding site" evidence="1">
    <location>
        <begin position="178"/>
        <end position="179"/>
    </location>
    <ligand>
        <name>ATP</name>
        <dbReference type="ChEBI" id="CHEBI:30616"/>
    </ligand>
</feature>
<feature type="binding site" evidence="1">
    <location>
        <position position="187"/>
    </location>
    <ligand>
        <name>ATP</name>
        <dbReference type="ChEBI" id="CHEBI:30616"/>
    </ligand>
</feature>
<feature type="binding site" evidence="1">
    <location>
        <begin position="211"/>
        <end position="213"/>
    </location>
    <ligand>
        <name>ATP</name>
        <dbReference type="ChEBI" id="CHEBI:30616"/>
    </ligand>
</feature>
<feature type="binding site" evidence="1">
    <location>
        <position position="248"/>
    </location>
    <ligand>
        <name>Mg(2+)</name>
        <dbReference type="ChEBI" id="CHEBI:18420"/>
        <label>1</label>
    </ligand>
</feature>
<feature type="binding site" evidence="1">
    <location>
        <position position="248"/>
    </location>
    <ligand>
        <name>Mn(2+)</name>
        <dbReference type="ChEBI" id="CHEBI:29035"/>
        <label>1</label>
    </ligand>
</feature>
<feature type="binding site" evidence="1">
    <location>
        <position position="260"/>
    </location>
    <ligand>
        <name>Mg(2+)</name>
        <dbReference type="ChEBI" id="CHEBI:18420"/>
        <label>1</label>
    </ligand>
</feature>
<feature type="binding site" evidence="1">
    <location>
        <position position="260"/>
    </location>
    <ligand>
        <name>Mg(2+)</name>
        <dbReference type="ChEBI" id="CHEBI:18420"/>
        <label>2</label>
    </ligand>
</feature>
<feature type="binding site" evidence="1">
    <location>
        <position position="260"/>
    </location>
    <ligand>
        <name>Mn(2+)</name>
        <dbReference type="ChEBI" id="CHEBI:29035"/>
        <label>1</label>
    </ligand>
</feature>
<feature type="binding site" evidence="1">
    <location>
        <position position="260"/>
    </location>
    <ligand>
        <name>Mn(2+)</name>
        <dbReference type="ChEBI" id="CHEBI:29035"/>
        <label>2</label>
    </ligand>
</feature>
<feature type="binding site" evidence="1">
    <location>
        <position position="262"/>
    </location>
    <ligand>
        <name>Mg(2+)</name>
        <dbReference type="ChEBI" id="CHEBI:18420"/>
        <label>2</label>
    </ligand>
</feature>
<feature type="binding site" evidence="1">
    <location>
        <position position="262"/>
    </location>
    <ligand>
        <name>Mn(2+)</name>
        <dbReference type="ChEBI" id="CHEBI:29035"/>
        <label>2</label>
    </ligand>
</feature>
<accession>Q7MCS5</accession>
<protein>
    <recommendedName>
        <fullName evidence="1">Probable alpha-L-glutamate ligase</fullName>
        <ecNumber evidence="1">6.3.2.-</ecNumber>
    </recommendedName>
</protein>
<dbReference type="EC" id="6.3.2.-" evidence="1"/>
<dbReference type="EMBL" id="BA000038">
    <property type="protein sequence ID" value="BAC97337.1"/>
    <property type="molecule type" value="Genomic_DNA"/>
</dbReference>
<dbReference type="RefSeq" id="WP_011081763.1">
    <property type="nucleotide sequence ID" value="NC_005140.1"/>
</dbReference>
<dbReference type="SMR" id="Q7MCS5"/>
<dbReference type="STRING" id="672.VV93_v1c42300"/>
<dbReference type="GeneID" id="93897607"/>
<dbReference type="KEGG" id="vvy:VVA1311"/>
<dbReference type="eggNOG" id="COG0189">
    <property type="taxonomic scope" value="Bacteria"/>
</dbReference>
<dbReference type="HOGENOM" id="CLU_054353_0_1_6"/>
<dbReference type="Proteomes" id="UP000002675">
    <property type="component" value="Chromosome II"/>
</dbReference>
<dbReference type="GO" id="GO:0005737">
    <property type="term" value="C:cytoplasm"/>
    <property type="evidence" value="ECO:0007669"/>
    <property type="project" value="TreeGrafter"/>
</dbReference>
<dbReference type="GO" id="GO:0005524">
    <property type="term" value="F:ATP binding"/>
    <property type="evidence" value="ECO:0007669"/>
    <property type="project" value="UniProtKB-UniRule"/>
</dbReference>
<dbReference type="GO" id="GO:0046872">
    <property type="term" value="F:metal ion binding"/>
    <property type="evidence" value="ECO:0007669"/>
    <property type="project" value="UniProtKB-KW"/>
</dbReference>
<dbReference type="GO" id="GO:0018169">
    <property type="term" value="F:ribosomal S6-glutamic acid ligase activity"/>
    <property type="evidence" value="ECO:0007669"/>
    <property type="project" value="TreeGrafter"/>
</dbReference>
<dbReference type="GO" id="GO:0036211">
    <property type="term" value="P:protein modification process"/>
    <property type="evidence" value="ECO:0007669"/>
    <property type="project" value="InterPro"/>
</dbReference>
<dbReference type="GO" id="GO:0009432">
    <property type="term" value="P:SOS response"/>
    <property type="evidence" value="ECO:0007669"/>
    <property type="project" value="TreeGrafter"/>
</dbReference>
<dbReference type="GO" id="GO:0006412">
    <property type="term" value="P:translation"/>
    <property type="evidence" value="ECO:0007669"/>
    <property type="project" value="UniProtKB-KW"/>
</dbReference>
<dbReference type="FunFam" id="3.30.470.20:FF:000058">
    <property type="entry name" value="Alpha-aminoadipate--LysW ligase LysX protein"/>
    <property type="match status" value="1"/>
</dbReference>
<dbReference type="FunFam" id="3.40.50.20:FF:000004">
    <property type="entry name" value="Probable alpha-L-glutamate ligase"/>
    <property type="match status" value="1"/>
</dbReference>
<dbReference type="FunFam" id="3.30.1490.20:FF:000005">
    <property type="entry name" value="Probable alpha-L-glutamate ligase 1"/>
    <property type="match status" value="1"/>
</dbReference>
<dbReference type="Gene3D" id="3.40.50.20">
    <property type="match status" value="1"/>
</dbReference>
<dbReference type="Gene3D" id="3.30.1490.20">
    <property type="entry name" value="ATP-grasp fold, A domain"/>
    <property type="match status" value="1"/>
</dbReference>
<dbReference type="Gene3D" id="3.30.470.20">
    <property type="entry name" value="ATP-grasp fold, B domain"/>
    <property type="match status" value="1"/>
</dbReference>
<dbReference type="HAMAP" id="MF_01552">
    <property type="entry name" value="RimK"/>
    <property type="match status" value="1"/>
</dbReference>
<dbReference type="InterPro" id="IPR011761">
    <property type="entry name" value="ATP-grasp"/>
</dbReference>
<dbReference type="InterPro" id="IPR013651">
    <property type="entry name" value="ATP-grasp_RimK-type"/>
</dbReference>
<dbReference type="InterPro" id="IPR013815">
    <property type="entry name" value="ATP_grasp_subdomain_1"/>
</dbReference>
<dbReference type="InterPro" id="IPR023533">
    <property type="entry name" value="RimK"/>
</dbReference>
<dbReference type="InterPro" id="IPR041107">
    <property type="entry name" value="Rimk_N"/>
</dbReference>
<dbReference type="InterPro" id="IPR004666">
    <property type="entry name" value="Rp_bS6_RimK/Lys_biosynth_LsyX"/>
</dbReference>
<dbReference type="NCBIfam" id="NF007764">
    <property type="entry name" value="PRK10446.1"/>
    <property type="match status" value="1"/>
</dbReference>
<dbReference type="NCBIfam" id="TIGR00768">
    <property type="entry name" value="rimK_fam"/>
    <property type="match status" value="1"/>
</dbReference>
<dbReference type="PANTHER" id="PTHR21621:SF7">
    <property type="entry name" value="RIBOSOMAL PROTEIN BS6--L-GLUTAMATE LIGASE"/>
    <property type="match status" value="1"/>
</dbReference>
<dbReference type="PANTHER" id="PTHR21621">
    <property type="entry name" value="RIBOSOMAL PROTEIN S6 MODIFICATION PROTEIN"/>
    <property type="match status" value="1"/>
</dbReference>
<dbReference type="Pfam" id="PF08443">
    <property type="entry name" value="RimK"/>
    <property type="match status" value="1"/>
</dbReference>
<dbReference type="Pfam" id="PF18030">
    <property type="entry name" value="Rimk_N"/>
    <property type="match status" value="1"/>
</dbReference>
<dbReference type="SUPFAM" id="SSF56059">
    <property type="entry name" value="Glutathione synthetase ATP-binding domain-like"/>
    <property type="match status" value="1"/>
</dbReference>
<dbReference type="PROSITE" id="PS50975">
    <property type="entry name" value="ATP_GRASP"/>
    <property type="match status" value="1"/>
</dbReference>
<gene>
    <name evidence="1" type="primary">rimK</name>
    <name type="ordered locus">VVA1311</name>
</gene>
<reference key="1">
    <citation type="journal article" date="2003" name="Genome Res.">
        <title>Comparative genome analysis of Vibrio vulnificus, a marine pathogen.</title>
        <authorList>
            <person name="Chen C.-Y."/>
            <person name="Wu K.-M."/>
            <person name="Chang Y.-C."/>
            <person name="Chang C.-H."/>
            <person name="Tsai H.-C."/>
            <person name="Liao T.-L."/>
            <person name="Liu Y.-M."/>
            <person name="Chen H.-J."/>
            <person name="Shen A.B.-T."/>
            <person name="Li J.-C."/>
            <person name="Su T.-L."/>
            <person name="Shao C.-P."/>
            <person name="Lee C.-T."/>
            <person name="Hor L.-I."/>
            <person name="Tsai S.-F."/>
        </authorList>
    </citation>
    <scope>NUCLEOTIDE SEQUENCE [LARGE SCALE GENOMIC DNA]</scope>
    <source>
        <strain>YJ016</strain>
    </source>
</reference>
<sequence>MRIAILSRNENLYSTMRLKQAGEARGHEVDVIDTLHCYMDITSNNPKIRYKGEELPQYDAIIPRIGASVTFYGTAVVRQFEMMGTFVVNESVAISRSRDKLRSLQLLSRKGIGLPRTGFAHHPDNIQDVIRNVGGAPLVIKLLEGTQGIGVVLAETNKAAESVIEAFMGLKANIMVQEFIEEAKGADIRCFVVGNKVIAAMKRQAKEGEFRSNLHRGGSAQLVRLSKEERATAINAAKVMGLNLCGVDILQSKNGPVVMEVNSSPGLEGIEQATNKDVAGMIYEFIEKNAKPNSNRTKGRG</sequence>
<evidence type="ECO:0000255" key="1">
    <source>
        <dbReference type="HAMAP-Rule" id="MF_01552"/>
    </source>
</evidence>
<proteinExistence type="inferred from homology"/>